<sequence>MTDLKASSLRALKLMDLTTLNDDDTDEKVIALCHQAKTPVGNTAAICIYPRFIPIARKTLKEQGTPEIRIATVTNFPHGNDDIEIALAETRAAIAYGADEVDVVFPYRALMAGNEQVGFDLVKACKEACAAANVLLKVIIETGELKDEALIRKASEISIKAGADFIKTSTGKVAVNATPESARIMMEVIRDMGVEKTVGFKPAGGVRTAEDAQKYLAIADELFGADWADARHYRFGASSLLASLLKALGHGDGKSASSY</sequence>
<dbReference type="EC" id="4.1.2.4" evidence="1"/>
<dbReference type="EMBL" id="CU928164">
    <property type="protein sequence ID" value="CAR21009.1"/>
    <property type="molecule type" value="Genomic_DNA"/>
</dbReference>
<dbReference type="RefSeq" id="WP_001295412.1">
    <property type="nucleotide sequence ID" value="NC_011750.1"/>
</dbReference>
<dbReference type="RefSeq" id="YP_002410758.1">
    <property type="nucleotide sequence ID" value="NC_011750.1"/>
</dbReference>
<dbReference type="SMR" id="B7NW61"/>
<dbReference type="STRING" id="585057.ECIAI39_4913"/>
<dbReference type="GeneID" id="93777463"/>
<dbReference type="KEGG" id="ect:ECIAI39_4913"/>
<dbReference type="PATRIC" id="fig|585057.6.peg.5075"/>
<dbReference type="HOGENOM" id="CLU_053595_3_1_6"/>
<dbReference type="UniPathway" id="UPA00002">
    <property type="reaction ID" value="UER00468"/>
</dbReference>
<dbReference type="Proteomes" id="UP000000749">
    <property type="component" value="Chromosome"/>
</dbReference>
<dbReference type="GO" id="GO:0005737">
    <property type="term" value="C:cytoplasm"/>
    <property type="evidence" value="ECO:0007669"/>
    <property type="project" value="UniProtKB-SubCell"/>
</dbReference>
<dbReference type="GO" id="GO:0004139">
    <property type="term" value="F:deoxyribose-phosphate aldolase activity"/>
    <property type="evidence" value="ECO:0007669"/>
    <property type="project" value="UniProtKB-UniRule"/>
</dbReference>
<dbReference type="GO" id="GO:0006018">
    <property type="term" value="P:2-deoxyribose 1-phosphate catabolic process"/>
    <property type="evidence" value="ECO:0007669"/>
    <property type="project" value="UniProtKB-UniRule"/>
</dbReference>
<dbReference type="GO" id="GO:0016052">
    <property type="term" value="P:carbohydrate catabolic process"/>
    <property type="evidence" value="ECO:0007669"/>
    <property type="project" value="TreeGrafter"/>
</dbReference>
<dbReference type="GO" id="GO:0009264">
    <property type="term" value="P:deoxyribonucleotide catabolic process"/>
    <property type="evidence" value="ECO:0007669"/>
    <property type="project" value="InterPro"/>
</dbReference>
<dbReference type="CDD" id="cd00959">
    <property type="entry name" value="DeoC"/>
    <property type="match status" value="1"/>
</dbReference>
<dbReference type="FunFam" id="3.20.20.70:FF:000034">
    <property type="entry name" value="Deoxyribose-phosphate aldolase"/>
    <property type="match status" value="1"/>
</dbReference>
<dbReference type="Gene3D" id="3.20.20.70">
    <property type="entry name" value="Aldolase class I"/>
    <property type="match status" value="1"/>
</dbReference>
<dbReference type="HAMAP" id="MF_00592">
    <property type="entry name" value="DeoC_type2"/>
    <property type="match status" value="1"/>
</dbReference>
<dbReference type="InterPro" id="IPR013785">
    <property type="entry name" value="Aldolase_TIM"/>
</dbReference>
<dbReference type="InterPro" id="IPR011343">
    <property type="entry name" value="DeoC"/>
</dbReference>
<dbReference type="InterPro" id="IPR002915">
    <property type="entry name" value="DeoC/FbaB/LacD_aldolase"/>
</dbReference>
<dbReference type="InterPro" id="IPR023649">
    <property type="entry name" value="DeoC_typeII"/>
</dbReference>
<dbReference type="NCBIfam" id="TIGR00126">
    <property type="entry name" value="deoC"/>
    <property type="match status" value="1"/>
</dbReference>
<dbReference type="PANTHER" id="PTHR10889">
    <property type="entry name" value="DEOXYRIBOSE-PHOSPHATE ALDOLASE"/>
    <property type="match status" value="1"/>
</dbReference>
<dbReference type="PANTHER" id="PTHR10889:SF3">
    <property type="entry name" value="DEOXYRIBOSE-PHOSPHATE ALDOLASE"/>
    <property type="match status" value="1"/>
</dbReference>
<dbReference type="Pfam" id="PF01791">
    <property type="entry name" value="DeoC"/>
    <property type="match status" value="1"/>
</dbReference>
<dbReference type="PIRSF" id="PIRSF001357">
    <property type="entry name" value="DeoC"/>
    <property type="match status" value="1"/>
</dbReference>
<dbReference type="SMART" id="SM01133">
    <property type="entry name" value="DeoC"/>
    <property type="match status" value="1"/>
</dbReference>
<dbReference type="SUPFAM" id="SSF51569">
    <property type="entry name" value="Aldolase"/>
    <property type="match status" value="1"/>
</dbReference>
<gene>
    <name evidence="1" type="primary">deoC</name>
    <name type="ordered locus">ECIAI39_4913</name>
</gene>
<comment type="function">
    <text evidence="1">Catalyzes a reversible aldol reaction between acetaldehyde and D-glyceraldehyde 3-phosphate to generate 2-deoxy-D-ribose 5-phosphate.</text>
</comment>
<comment type="catalytic activity">
    <reaction evidence="1">
        <text>2-deoxy-D-ribose 5-phosphate = D-glyceraldehyde 3-phosphate + acetaldehyde</text>
        <dbReference type="Rhea" id="RHEA:12821"/>
        <dbReference type="ChEBI" id="CHEBI:15343"/>
        <dbReference type="ChEBI" id="CHEBI:59776"/>
        <dbReference type="ChEBI" id="CHEBI:62877"/>
        <dbReference type="EC" id="4.1.2.4"/>
    </reaction>
</comment>
<comment type="pathway">
    <text evidence="1">Carbohydrate degradation; 2-deoxy-D-ribose 1-phosphate degradation; D-glyceraldehyde 3-phosphate and acetaldehyde from 2-deoxy-alpha-D-ribose 1-phosphate: step 2/2.</text>
</comment>
<comment type="subcellular location">
    <subcellularLocation>
        <location evidence="1">Cytoplasm</location>
    </subcellularLocation>
</comment>
<comment type="similarity">
    <text evidence="1">Belongs to the DeoC/FbaB aldolase family. DeoC type 2 subfamily.</text>
</comment>
<keyword id="KW-0963">Cytoplasm</keyword>
<keyword id="KW-0456">Lyase</keyword>
<keyword id="KW-0704">Schiff base</keyword>
<proteinExistence type="inferred from homology"/>
<protein>
    <recommendedName>
        <fullName evidence="1">Deoxyribose-phosphate aldolase</fullName>
        <shortName evidence="1">DERA</shortName>
        <ecNumber evidence="1">4.1.2.4</ecNumber>
    </recommendedName>
    <alternativeName>
        <fullName evidence="1">2-deoxy-D-ribose 5-phosphate aldolase</fullName>
    </alternativeName>
    <alternativeName>
        <fullName evidence="1">Phosphodeoxyriboaldolase</fullName>
        <shortName evidence="1">Deoxyriboaldolase</shortName>
    </alternativeName>
</protein>
<name>DEOC_ECO7I</name>
<feature type="chain" id="PRO_1000129801" description="Deoxyribose-phosphate aldolase">
    <location>
        <begin position="1"/>
        <end position="259"/>
    </location>
</feature>
<feature type="active site" description="Proton donor/acceptor" evidence="1">
    <location>
        <position position="102"/>
    </location>
</feature>
<feature type="active site" description="Schiff-base intermediate with acetaldehyde" evidence="1">
    <location>
        <position position="167"/>
    </location>
</feature>
<feature type="active site" description="Proton donor/acceptor" evidence="1">
    <location>
        <position position="201"/>
    </location>
</feature>
<organism>
    <name type="scientific">Escherichia coli O7:K1 (strain IAI39 / ExPEC)</name>
    <dbReference type="NCBI Taxonomy" id="585057"/>
    <lineage>
        <taxon>Bacteria</taxon>
        <taxon>Pseudomonadati</taxon>
        <taxon>Pseudomonadota</taxon>
        <taxon>Gammaproteobacteria</taxon>
        <taxon>Enterobacterales</taxon>
        <taxon>Enterobacteriaceae</taxon>
        <taxon>Escherichia</taxon>
    </lineage>
</organism>
<accession>B7NW61</accession>
<reference key="1">
    <citation type="journal article" date="2009" name="PLoS Genet.">
        <title>Organised genome dynamics in the Escherichia coli species results in highly diverse adaptive paths.</title>
        <authorList>
            <person name="Touchon M."/>
            <person name="Hoede C."/>
            <person name="Tenaillon O."/>
            <person name="Barbe V."/>
            <person name="Baeriswyl S."/>
            <person name="Bidet P."/>
            <person name="Bingen E."/>
            <person name="Bonacorsi S."/>
            <person name="Bouchier C."/>
            <person name="Bouvet O."/>
            <person name="Calteau A."/>
            <person name="Chiapello H."/>
            <person name="Clermont O."/>
            <person name="Cruveiller S."/>
            <person name="Danchin A."/>
            <person name="Diard M."/>
            <person name="Dossat C."/>
            <person name="Karoui M.E."/>
            <person name="Frapy E."/>
            <person name="Garry L."/>
            <person name="Ghigo J.M."/>
            <person name="Gilles A.M."/>
            <person name="Johnson J."/>
            <person name="Le Bouguenec C."/>
            <person name="Lescat M."/>
            <person name="Mangenot S."/>
            <person name="Martinez-Jehanne V."/>
            <person name="Matic I."/>
            <person name="Nassif X."/>
            <person name="Oztas S."/>
            <person name="Petit M.A."/>
            <person name="Pichon C."/>
            <person name="Rouy Z."/>
            <person name="Ruf C.S."/>
            <person name="Schneider D."/>
            <person name="Tourret J."/>
            <person name="Vacherie B."/>
            <person name="Vallenet D."/>
            <person name="Medigue C."/>
            <person name="Rocha E.P.C."/>
            <person name="Denamur E."/>
        </authorList>
    </citation>
    <scope>NUCLEOTIDE SEQUENCE [LARGE SCALE GENOMIC DNA]</scope>
    <source>
        <strain>IAI39 / ExPEC</strain>
    </source>
</reference>
<evidence type="ECO:0000255" key="1">
    <source>
        <dbReference type="HAMAP-Rule" id="MF_00592"/>
    </source>
</evidence>